<comment type="function">
    <text evidence="2">With S4 and S5 plays an important role in translational accuracy.</text>
</comment>
<comment type="function">
    <text evidence="2">Interacts with and stabilizes bases of the 16S rRNA that are involved in tRNA selection in the A site and with the mRNA backbone. Located at the interface of the 30S and 50S subunits, it traverses the body of the 30S subunit contacting proteins on the other side and probably holding the rRNA structure together. The combined cluster of proteins S8, S12 and S17 appears to hold together the shoulder and platform of the 30S subunit.</text>
</comment>
<comment type="subunit">
    <text evidence="2">Part of the 30S ribosomal subunit. Contacts proteins S8 and S17. May interact with IF1 in the 30S initiation complex.</text>
</comment>
<comment type="similarity">
    <text evidence="2">Belongs to the universal ribosomal protein uS12 family.</text>
</comment>
<reference key="1">
    <citation type="journal article" date="2009" name="BMC Genomics">
        <title>Genome evolution driven by host adaptations results in a more virulent and antimicrobial-resistant Streptococcus pneumoniae serotype 14.</title>
        <authorList>
            <person name="Ding F."/>
            <person name="Tang P."/>
            <person name="Hsu M.-H."/>
            <person name="Cui P."/>
            <person name="Hu S."/>
            <person name="Yu J."/>
            <person name="Chiu C.-H."/>
        </authorList>
    </citation>
    <scope>NUCLEOTIDE SEQUENCE [LARGE SCALE GENOMIC DNA]</scope>
    <source>
        <strain>CGSP14</strain>
    </source>
</reference>
<gene>
    <name evidence="2" type="primary">rpsL</name>
    <name type="ordered locus">SPCG_0282</name>
</gene>
<organism>
    <name type="scientific">Streptococcus pneumoniae (strain CGSP14)</name>
    <dbReference type="NCBI Taxonomy" id="516950"/>
    <lineage>
        <taxon>Bacteria</taxon>
        <taxon>Bacillati</taxon>
        <taxon>Bacillota</taxon>
        <taxon>Bacilli</taxon>
        <taxon>Lactobacillales</taxon>
        <taxon>Streptococcaceae</taxon>
        <taxon>Streptococcus</taxon>
    </lineage>
</organism>
<accession>B2ISJ7</accession>
<protein>
    <recommendedName>
        <fullName evidence="2">Small ribosomal subunit protein uS12</fullName>
    </recommendedName>
    <alternativeName>
        <fullName evidence="4">30S ribosomal protein S12</fullName>
    </alternativeName>
</protein>
<evidence type="ECO:0000250" key="1"/>
<evidence type="ECO:0000255" key="2">
    <source>
        <dbReference type="HAMAP-Rule" id="MF_00403"/>
    </source>
</evidence>
<evidence type="ECO:0000256" key="3">
    <source>
        <dbReference type="SAM" id="MobiDB-lite"/>
    </source>
</evidence>
<evidence type="ECO:0000305" key="4"/>
<dbReference type="EMBL" id="CP001033">
    <property type="protein sequence ID" value="ACB89534.1"/>
    <property type="molecule type" value="Genomic_DNA"/>
</dbReference>
<dbReference type="RefSeq" id="WP_001142332.1">
    <property type="nucleotide sequence ID" value="NC_010582.1"/>
</dbReference>
<dbReference type="SMR" id="B2ISJ7"/>
<dbReference type="GeneID" id="93922571"/>
<dbReference type="KEGG" id="spw:SPCG_0282"/>
<dbReference type="HOGENOM" id="CLU_104295_1_2_9"/>
<dbReference type="GO" id="GO:0015935">
    <property type="term" value="C:small ribosomal subunit"/>
    <property type="evidence" value="ECO:0007669"/>
    <property type="project" value="InterPro"/>
</dbReference>
<dbReference type="GO" id="GO:0019843">
    <property type="term" value="F:rRNA binding"/>
    <property type="evidence" value="ECO:0007669"/>
    <property type="project" value="UniProtKB-UniRule"/>
</dbReference>
<dbReference type="GO" id="GO:0003735">
    <property type="term" value="F:structural constituent of ribosome"/>
    <property type="evidence" value="ECO:0007669"/>
    <property type="project" value="InterPro"/>
</dbReference>
<dbReference type="GO" id="GO:0000049">
    <property type="term" value="F:tRNA binding"/>
    <property type="evidence" value="ECO:0007669"/>
    <property type="project" value="UniProtKB-UniRule"/>
</dbReference>
<dbReference type="GO" id="GO:0006412">
    <property type="term" value="P:translation"/>
    <property type="evidence" value="ECO:0007669"/>
    <property type="project" value="UniProtKB-UniRule"/>
</dbReference>
<dbReference type="CDD" id="cd03368">
    <property type="entry name" value="Ribosomal_S12"/>
    <property type="match status" value="1"/>
</dbReference>
<dbReference type="FunFam" id="2.40.50.140:FF:000001">
    <property type="entry name" value="30S ribosomal protein S12"/>
    <property type="match status" value="1"/>
</dbReference>
<dbReference type="Gene3D" id="2.40.50.140">
    <property type="entry name" value="Nucleic acid-binding proteins"/>
    <property type="match status" value="1"/>
</dbReference>
<dbReference type="HAMAP" id="MF_00403_B">
    <property type="entry name" value="Ribosomal_uS12_B"/>
    <property type="match status" value="1"/>
</dbReference>
<dbReference type="InterPro" id="IPR012340">
    <property type="entry name" value="NA-bd_OB-fold"/>
</dbReference>
<dbReference type="InterPro" id="IPR006032">
    <property type="entry name" value="Ribosomal_uS12"/>
</dbReference>
<dbReference type="InterPro" id="IPR005679">
    <property type="entry name" value="Ribosomal_uS12_bac"/>
</dbReference>
<dbReference type="NCBIfam" id="TIGR00981">
    <property type="entry name" value="rpsL_bact"/>
    <property type="match status" value="1"/>
</dbReference>
<dbReference type="PANTHER" id="PTHR11652">
    <property type="entry name" value="30S RIBOSOMAL PROTEIN S12 FAMILY MEMBER"/>
    <property type="match status" value="1"/>
</dbReference>
<dbReference type="Pfam" id="PF00164">
    <property type="entry name" value="Ribosom_S12_S23"/>
    <property type="match status" value="1"/>
</dbReference>
<dbReference type="PIRSF" id="PIRSF002133">
    <property type="entry name" value="Ribosomal_S12/S23"/>
    <property type="match status" value="1"/>
</dbReference>
<dbReference type="PRINTS" id="PR01034">
    <property type="entry name" value="RIBOSOMALS12"/>
</dbReference>
<dbReference type="SUPFAM" id="SSF50249">
    <property type="entry name" value="Nucleic acid-binding proteins"/>
    <property type="match status" value="1"/>
</dbReference>
<dbReference type="PROSITE" id="PS00055">
    <property type="entry name" value="RIBOSOMAL_S12"/>
    <property type="match status" value="1"/>
</dbReference>
<feature type="chain" id="PRO_1000123526" description="Small ribosomal subunit protein uS12">
    <location>
        <begin position="1"/>
        <end position="137"/>
    </location>
</feature>
<feature type="region of interest" description="Disordered" evidence="3">
    <location>
        <begin position="1"/>
        <end position="57"/>
    </location>
</feature>
<feature type="modified residue" description="3-methylthioaspartic acid" evidence="1">
    <location>
        <position position="102"/>
    </location>
</feature>
<proteinExistence type="inferred from homology"/>
<sequence length="137" mass="15144">MPTINQLVRKPRKSKVEKSKSPALNVGYNSHKKVQTNVSSPQKRGVATRVGTMTPKKPNSALRKFARVRLSNLIEVTAYIPGIGHNLQEHSVVLLRGGRVKDLPGVRYHIVRGALDTAGVNDRKQGRSKYGTKRPKA</sequence>
<name>RS12_STRPS</name>
<keyword id="KW-0488">Methylation</keyword>
<keyword id="KW-0687">Ribonucleoprotein</keyword>
<keyword id="KW-0689">Ribosomal protein</keyword>
<keyword id="KW-0694">RNA-binding</keyword>
<keyword id="KW-0699">rRNA-binding</keyword>
<keyword id="KW-0820">tRNA-binding</keyword>